<organism>
    <name type="scientific">Citrifermentans bemidjiense (strain ATCC BAA-1014 / DSM 16622 / JCM 12645 / Bem)</name>
    <name type="common">Geobacter bemidjiensis</name>
    <dbReference type="NCBI Taxonomy" id="404380"/>
    <lineage>
        <taxon>Bacteria</taxon>
        <taxon>Pseudomonadati</taxon>
        <taxon>Thermodesulfobacteriota</taxon>
        <taxon>Desulfuromonadia</taxon>
        <taxon>Geobacterales</taxon>
        <taxon>Geobacteraceae</taxon>
        <taxon>Citrifermentans</taxon>
    </lineage>
</organism>
<feature type="chain" id="PRO_1000133737" description="Cobalt-precorrin-5B C(1)-methyltransferase">
    <location>
        <begin position="1"/>
        <end position="356"/>
    </location>
</feature>
<keyword id="KW-0169">Cobalamin biosynthesis</keyword>
<keyword id="KW-0489">Methyltransferase</keyword>
<keyword id="KW-1185">Reference proteome</keyword>
<keyword id="KW-0949">S-adenosyl-L-methionine</keyword>
<keyword id="KW-0808">Transferase</keyword>
<proteinExistence type="inferred from homology"/>
<name>CBID_CITBB</name>
<comment type="function">
    <text evidence="1">Catalyzes the methylation of C-1 in cobalt-precorrin-5B to form cobalt-precorrin-6A.</text>
</comment>
<comment type="catalytic activity">
    <reaction evidence="1">
        <text>Co-precorrin-5B + S-adenosyl-L-methionine = Co-precorrin-6A + S-adenosyl-L-homocysteine</text>
        <dbReference type="Rhea" id="RHEA:26285"/>
        <dbReference type="ChEBI" id="CHEBI:57856"/>
        <dbReference type="ChEBI" id="CHEBI:59789"/>
        <dbReference type="ChEBI" id="CHEBI:60063"/>
        <dbReference type="ChEBI" id="CHEBI:60064"/>
        <dbReference type="EC" id="2.1.1.195"/>
    </reaction>
</comment>
<comment type="pathway">
    <text evidence="1">Cofactor biosynthesis; adenosylcobalamin biosynthesis; cob(II)yrinate a,c-diamide from sirohydrochlorin (anaerobic route): step 6/10.</text>
</comment>
<comment type="similarity">
    <text evidence="1">Belongs to the CbiD family.</text>
</comment>
<gene>
    <name evidence="1" type="primary">cbiD</name>
    <name type="ordered locus">Gbem_3544</name>
</gene>
<dbReference type="EC" id="2.1.1.195" evidence="1"/>
<dbReference type="EMBL" id="CP001124">
    <property type="protein sequence ID" value="ACH40537.1"/>
    <property type="molecule type" value="Genomic_DNA"/>
</dbReference>
<dbReference type="RefSeq" id="WP_012531973.1">
    <property type="nucleotide sequence ID" value="NC_011146.1"/>
</dbReference>
<dbReference type="SMR" id="B5EC81"/>
<dbReference type="STRING" id="404380.Gbem_3544"/>
<dbReference type="KEGG" id="gbm:Gbem_3544"/>
<dbReference type="eggNOG" id="COG1903">
    <property type="taxonomic scope" value="Bacteria"/>
</dbReference>
<dbReference type="HOGENOM" id="CLU_041273_0_0_7"/>
<dbReference type="OrthoDB" id="6439987at2"/>
<dbReference type="UniPathway" id="UPA00148">
    <property type="reaction ID" value="UER00227"/>
</dbReference>
<dbReference type="Proteomes" id="UP000008825">
    <property type="component" value="Chromosome"/>
</dbReference>
<dbReference type="GO" id="GO:0043780">
    <property type="term" value="F:cobalt-precorrin-5B C1-methyltransferase activity"/>
    <property type="evidence" value="ECO:0007669"/>
    <property type="project" value="RHEA"/>
</dbReference>
<dbReference type="GO" id="GO:0019251">
    <property type="term" value="P:anaerobic cobalamin biosynthetic process"/>
    <property type="evidence" value="ECO:0007669"/>
    <property type="project" value="UniProtKB-UniRule"/>
</dbReference>
<dbReference type="GO" id="GO:0032259">
    <property type="term" value="P:methylation"/>
    <property type="evidence" value="ECO:0007669"/>
    <property type="project" value="UniProtKB-KW"/>
</dbReference>
<dbReference type="Gene3D" id="3.30.2110.10">
    <property type="entry name" value="CbiD-like"/>
    <property type="match status" value="1"/>
</dbReference>
<dbReference type="HAMAP" id="MF_00787">
    <property type="entry name" value="CbiD"/>
    <property type="match status" value="1"/>
</dbReference>
<dbReference type="InterPro" id="IPR002748">
    <property type="entry name" value="CbiD"/>
</dbReference>
<dbReference type="InterPro" id="IPR036074">
    <property type="entry name" value="CbiD_sf"/>
</dbReference>
<dbReference type="NCBIfam" id="TIGR00312">
    <property type="entry name" value="cbiD"/>
    <property type="match status" value="1"/>
</dbReference>
<dbReference type="NCBIfam" id="NF000849">
    <property type="entry name" value="PRK00075.1-1"/>
    <property type="match status" value="1"/>
</dbReference>
<dbReference type="PANTHER" id="PTHR35863">
    <property type="entry name" value="COBALT-PRECORRIN-5B C(1)-METHYLTRANSFERASE"/>
    <property type="match status" value="1"/>
</dbReference>
<dbReference type="PANTHER" id="PTHR35863:SF1">
    <property type="entry name" value="COBALT-PRECORRIN-5B C(1)-METHYLTRANSFERASE"/>
    <property type="match status" value="1"/>
</dbReference>
<dbReference type="Pfam" id="PF01888">
    <property type="entry name" value="CbiD"/>
    <property type="match status" value="1"/>
</dbReference>
<dbReference type="PIRSF" id="PIRSF026782">
    <property type="entry name" value="CbiD"/>
    <property type="match status" value="1"/>
</dbReference>
<dbReference type="SUPFAM" id="SSF111342">
    <property type="entry name" value="CbiD-like"/>
    <property type="match status" value="1"/>
</dbReference>
<accession>B5EC81</accession>
<reference key="1">
    <citation type="submission" date="2008-07" db="EMBL/GenBank/DDBJ databases">
        <title>Complete sequence of Geobacter bemidjiensis BEM.</title>
        <authorList>
            <consortium name="US DOE Joint Genome Institute"/>
            <person name="Lucas S."/>
            <person name="Copeland A."/>
            <person name="Lapidus A."/>
            <person name="Glavina del Rio T."/>
            <person name="Dalin E."/>
            <person name="Tice H."/>
            <person name="Bruce D."/>
            <person name="Goodwin L."/>
            <person name="Pitluck S."/>
            <person name="Kiss H."/>
            <person name="Brettin T."/>
            <person name="Detter J.C."/>
            <person name="Han C."/>
            <person name="Kuske C.R."/>
            <person name="Schmutz J."/>
            <person name="Larimer F."/>
            <person name="Land M."/>
            <person name="Hauser L."/>
            <person name="Kyrpides N."/>
            <person name="Lykidis A."/>
            <person name="Lovley D."/>
            <person name="Richardson P."/>
        </authorList>
    </citation>
    <scope>NUCLEOTIDE SEQUENCE [LARGE SCALE GENOMIC DNA]</scope>
    <source>
        <strain>ATCC BAA-1014 / DSM 16622 / JCM 12645 / Bem</strain>
    </source>
</reference>
<protein>
    <recommendedName>
        <fullName evidence="1">Cobalt-precorrin-5B C(1)-methyltransferase</fullName>
        <ecNumber evidence="1">2.1.1.195</ecNumber>
    </recommendedName>
    <alternativeName>
        <fullName evidence="1">Cobalt-precorrin-6A synthase</fullName>
    </alternativeName>
</protein>
<evidence type="ECO:0000255" key="1">
    <source>
        <dbReference type="HAMAP-Rule" id="MF_00787"/>
    </source>
</evidence>
<sequence length="356" mass="38031">MSGKELRYGFTTGACAAAAVKAAAQMLRDQGMVHEVELMLPCGIGASFQVHGGVLRDNTASCYVVKDAGDDPDVTNGAEIHVTASIEFFTKNRIVIEGGTGIGRVTKPGLAVPVGEWAINPVPRSMILEVVKEVFALRCIPATLTFNISIPNGEELAKKTLNERLGIVGGLSILGTTGIVKPISAKAWTDTVDASVDVALACGARTVVLATGRSSEIVAQKHLALSEEAFVMMGDHFGYAMRSCASKEVPEVVVAGQFAKLVKIACGHEQTHVTSSQMDLDALAWWLREVPATAHLEQMAREANTARHLLEASGYNQAVIELVCSRVLKVCAEVAPWVKMRVMLAGYHGELLYFTP</sequence>